<accession>B8N803</accession>
<name>ABNB_ASPFN</name>
<comment type="function">
    <text evidence="1">Endo-1,5-alpha-L-arabinanase involved in degradation of pectin. Its preferred substrate is linear 1,5-alpha-L-arabinan (By similarity).</text>
</comment>
<comment type="catalytic activity">
    <reaction>
        <text>Endohydrolysis of (1-&gt;5)-alpha-arabinofuranosidic linkages in (1-&gt;5)-arabinans.</text>
        <dbReference type="EC" id="3.2.1.99"/>
    </reaction>
</comment>
<comment type="pathway">
    <text>Glycan metabolism; L-arabinan degradation.</text>
</comment>
<comment type="subcellular location">
    <subcellularLocation>
        <location evidence="1">Secreted</location>
    </subcellularLocation>
</comment>
<comment type="similarity">
    <text evidence="5">Belongs to the glycosyl hydrolase 43 family.</text>
</comment>
<comment type="sequence caution" evidence="5">
    <conflict type="erroneous initiation">
        <sequence resource="EMBL-CDS" id="EED53222"/>
    </conflict>
    <text>Extended N-terminus.</text>
</comment>
<dbReference type="EC" id="3.2.1.99"/>
<dbReference type="EMBL" id="EQ963475">
    <property type="protein sequence ID" value="EED53222.1"/>
    <property type="status" value="ALT_INIT"/>
    <property type="molecule type" value="Genomic_DNA"/>
</dbReference>
<dbReference type="RefSeq" id="XP_002376468.1">
    <property type="nucleotide sequence ID" value="XM_002376427.1"/>
</dbReference>
<dbReference type="SMR" id="B8N803"/>
<dbReference type="STRING" id="332952.B8N803"/>
<dbReference type="GlyCosmos" id="B8N803">
    <property type="glycosylation" value="1 site, No reported glycans"/>
</dbReference>
<dbReference type="EnsemblFungi" id="EED53222">
    <property type="protein sequence ID" value="EED53222"/>
    <property type="gene ID" value="AFLA_105970"/>
</dbReference>
<dbReference type="VEuPathDB" id="FungiDB:AFLA_006533"/>
<dbReference type="eggNOG" id="ENOG502S2VU">
    <property type="taxonomic scope" value="Eukaryota"/>
</dbReference>
<dbReference type="UniPathway" id="UPA00667"/>
<dbReference type="GO" id="GO:0005576">
    <property type="term" value="C:extracellular region"/>
    <property type="evidence" value="ECO:0007669"/>
    <property type="project" value="UniProtKB-SubCell"/>
</dbReference>
<dbReference type="GO" id="GO:0046558">
    <property type="term" value="F:arabinan endo-1,5-alpha-L-arabinosidase activity"/>
    <property type="evidence" value="ECO:0007669"/>
    <property type="project" value="UniProtKB-EC"/>
</dbReference>
<dbReference type="GO" id="GO:0031222">
    <property type="term" value="P:arabinan catabolic process"/>
    <property type="evidence" value="ECO:0007669"/>
    <property type="project" value="UniProtKB-UniPathway"/>
</dbReference>
<dbReference type="GO" id="GO:0045493">
    <property type="term" value="P:xylan catabolic process"/>
    <property type="evidence" value="ECO:0007669"/>
    <property type="project" value="UniProtKB-KW"/>
</dbReference>
<dbReference type="CDD" id="cd18831">
    <property type="entry name" value="GH43_AnAbnA-like"/>
    <property type="match status" value="1"/>
</dbReference>
<dbReference type="Gene3D" id="2.115.10.20">
    <property type="entry name" value="Glycosyl hydrolase domain, family 43"/>
    <property type="match status" value="1"/>
</dbReference>
<dbReference type="InterPro" id="IPR050727">
    <property type="entry name" value="GH43_arabinanases"/>
</dbReference>
<dbReference type="InterPro" id="IPR006710">
    <property type="entry name" value="Glyco_hydro_43"/>
</dbReference>
<dbReference type="InterPro" id="IPR016840">
    <property type="entry name" value="Glyco_hydro_43_endo_a_Ara-ase"/>
</dbReference>
<dbReference type="InterPro" id="IPR023296">
    <property type="entry name" value="Glyco_hydro_beta-prop_sf"/>
</dbReference>
<dbReference type="PANTHER" id="PTHR43301">
    <property type="entry name" value="ARABINAN ENDO-1,5-ALPHA-L-ARABINOSIDASE"/>
    <property type="match status" value="1"/>
</dbReference>
<dbReference type="PANTHER" id="PTHR43301:SF4">
    <property type="entry name" value="ARABINAN ENDO-1,5-ALPHA-L-ARABINOSIDASE B"/>
    <property type="match status" value="1"/>
</dbReference>
<dbReference type="Pfam" id="PF04616">
    <property type="entry name" value="Glyco_hydro_43"/>
    <property type="match status" value="1"/>
</dbReference>
<dbReference type="PIRSF" id="PIRSF026534">
    <property type="entry name" value="Endo_alpha-L-arabinosidase"/>
    <property type="match status" value="1"/>
</dbReference>
<dbReference type="SUPFAM" id="SSF75005">
    <property type="entry name" value="Arabinanase/levansucrase/invertase"/>
    <property type="match status" value="1"/>
</dbReference>
<sequence length="358" mass="38848">MVLVATLFSLFTVSLCRSIPRSSPSSSPYTQATDLKIHDPTVINANGAYYAYGVGEHIVIHQAPGLAGPWKQIGSVLDKDSIIPKGDRAKPWAPTTIEVKGTFYCYYSVSNAGCRDSAIGVATSQSPGPGGWTDHGAIVQSGTGQGSDEHPFNEVNAIDPAVLVTGDKGHLVFGSYWSGIWQVPLNEDFSSVGNTTGLNAHHLAKHPKTERVNSQDQNPDPLCRDSSGRRPVEGAYISYHAPYYYLWLSWGQCCDYDPNNLPPSGEEYSIRVGRSESPHGPFVDKQGKELTQGGGELIYGSNNDVYAPGGQGVITVETGDILYYHYCESLFFRGLSEARLGYSYLGYVDGWPVIREAP</sequence>
<keyword id="KW-0119">Carbohydrate metabolism</keyword>
<keyword id="KW-0325">Glycoprotein</keyword>
<keyword id="KW-0326">Glycosidase</keyword>
<keyword id="KW-0378">Hydrolase</keyword>
<keyword id="KW-0624">Polysaccharide degradation</keyword>
<keyword id="KW-0964">Secreted</keyword>
<keyword id="KW-0732">Signal</keyword>
<keyword id="KW-0858">Xylan degradation</keyword>
<protein>
    <recommendedName>
        <fullName>Probable arabinan endo-1,5-alpha-L-arabinosidase B</fullName>
        <ecNumber>3.2.1.99</ecNumber>
    </recommendedName>
    <alternativeName>
        <fullName>Endo-1,5-alpha-L-arabinanase B</fullName>
        <shortName>ABN B</shortName>
    </alternativeName>
</protein>
<proteinExistence type="inferred from homology"/>
<reference key="1">
    <citation type="journal article" date="2015" name="Genome Announc.">
        <title>Genome sequence of Aspergillus flavus NRRL 3357, a strain that causes aflatoxin contamination of food and feed.</title>
        <authorList>
            <person name="Nierman W.C."/>
            <person name="Yu J."/>
            <person name="Fedorova-Abrams N.D."/>
            <person name="Losada L."/>
            <person name="Cleveland T.E."/>
            <person name="Bhatnagar D."/>
            <person name="Bennett J.W."/>
            <person name="Dean R."/>
            <person name="Payne G.A."/>
        </authorList>
    </citation>
    <scope>NUCLEOTIDE SEQUENCE [LARGE SCALE GENOMIC DNA]</scope>
    <source>
        <strain>ATCC 200026 / FGSC A1120 / IAM 13836 / NRRL 3357 / JCM 12722 / SRRC 167</strain>
    </source>
</reference>
<feature type="signal peptide" evidence="3">
    <location>
        <begin position="1"/>
        <end position="16"/>
    </location>
</feature>
<feature type="chain" id="PRO_0000394626" description="Probable arabinan endo-1,5-alpha-L-arabinosidase B">
    <location>
        <begin position="17"/>
        <end position="358"/>
    </location>
</feature>
<feature type="region of interest" description="Disordered" evidence="4">
    <location>
        <begin position="202"/>
        <end position="227"/>
    </location>
</feature>
<feature type="active site" description="Proton acceptor" evidence="2">
    <location>
        <position position="39"/>
    </location>
</feature>
<feature type="active site" description="Proton donor" evidence="2">
    <location>
        <position position="233"/>
    </location>
</feature>
<feature type="site" description="Important for catalytic activity, responsible for pKa modulation of the active site Glu and correct orientation of both the proton donor and substrate" evidence="2">
    <location>
        <position position="159"/>
    </location>
</feature>
<feature type="glycosylation site" description="N-linked (GlcNAc...) asparagine" evidence="3">
    <location>
        <position position="194"/>
    </location>
</feature>
<gene>
    <name type="primary">abnB</name>
    <name type="ORF">AFLA_105970</name>
</gene>
<evidence type="ECO:0000250" key="1"/>
<evidence type="ECO:0000250" key="2">
    <source>
        <dbReference type="UniProtKB" id="P94522"/>
    </source>
</evidence>
<evidence type="ECO:0000255" key="3"/>
<evidence type="ECO:0000256" key="4">
    <source>
        <dbReference type="SAM" id="MobiDB-lite"/>
    </source>
</evidence>
<evidence type="ECO:0000305" key="5"/>
<organism>
    <name type="scientific">Aspergillus flavus (strain ATCC 200026 / FGSC A1120 / IAM 13836 / NRRL 3357 / JCM 12722 / SRRC 167)</name>
    <dbReference type="NCBI Taxonomy" id="332952"/>
    <lineage>
        <taxon>Eukaryota</taxon>
        <taxon>Fungi</taxon>
        <taxon>Dikarya</taxon>
        <taxon>Ascomycota</taxon>
        <taxon>Pezizomycotina</taxon>
        <taxon>Eurotiomycetes</taxon>
        <taxon>Eurotiomycetidae</taxon>
        <taxon>Eurotiales</taxon>
        <taxon>Aspergillaceae</taxon>
        <taxon>Aspergillus</taxon>
        <taxon>Aspergillus subgen. Circumdati</taxon>
    </lineage>
</organism>